<accession>Q29HT0</accession>
<gene>
    <name type="ORF">GA14526</name>
</gene>
<organism>
    <name type="scientific">Drosophila pseudoobscura pseudoobscura</name>
    <name type="common">Fruit fly</name>
    <dbReference type="NCBI Taxonomy" id="46245"/>
    <lineage>
        <taxon>Eukaryota</taxon>
        <taxon>Metazoa</taxon>
        <taxon>Ecdysozoa</taxon>
        <taxon>Arthropoda</taxon>
        <taxon>Hexapoda</taxon>
        <taxon>Insecta</taxon>
        <taxon>Pterygota</taxon>
        <taxon>Neoptera</taxon>
        <taxon>Endopterygota</taxon>
        <taxon>Diptera</taxon>
        <taxon>Brachycera</taxon>
        <taxon>Muscomorpha</taxon>
        <taxon>Ephydroidea</taxon>
        <taxon>Drosophilidae</taxon>
        <taxon>Drosophila</taxon>
        <taxon>Sophophora</taxon>
    </lineage>
</organism>
<keyword id="KW-0067">ATP-binding</keyword>
<keyword id="KW-0479">Metal-binding</keyword>
<keyword id="KW-0547">Nucleotide-binding</keyword>
<keyword id="KW-1185">Reference proteome</keyword>
<keyword id="KW-0833">Ubl conjugation pathway</keyword>
<keyword id="KW-0862">Zinc</keyword>
<name>UBA5_DROPS</name>
<protein>
    <recommendedName>
        <fullName>Ubiquitin-like modifier-activating enzyme 5</fullName>
        <shortName>Ubiquitin-activating enzyme 5</shortName>
    </recommendedName>
</protein>
<comment type="function">
    <text evidence="1">E1-like enzyme which activates UFM1.</text>
</comment>
<comment type="similarity">
    <text evidence="3">Belongs to the ubiquitin-activating E1 family. UBA5 subfamily.</text>
</comment>
<evidence type="ECO:0000250" key="1"/>
<evidence type="ECO:0000256" key="2">
    <source>
        <dbReference type="SAM" id="MobiDB-lite"/>
    </source>
</evidence>
<evidence type="ECO:0000305" key="3"/>
<feature type="chain" id="PRO_0000391947" description="Ubiquitin-like modifier-activating enzyme 5">
    <location>
        <begin position="1"/>
        <end position="397"/>
    </location>
</feature>
<feature type="region of interest" description="Disordered" evidence="2">
    <location>
        <begin position="343"/>
        <end position="384"/>
    </location>
</feature>
<feature type="active site" description="Glycyl thioester intermediate" evidence="1">
    <location>
        <position position="243"/>
    </location>
</feature>
<feature type="binding site" evidence="1">
    <location>
        <position position="76"/>
    </location>
    <ligand>
        <name>ATP</name>
        <dbReference type="ChEBI" id="CHEBI:30616"/>
    </ligand>
</feature>
<feature type="binding site" evidence="1">
    <location>
        <position position="97"/>
    </location>
    <ligand>
        <name>ATP</name>
        <dbReference type="ChEBI" id="CHEBI:30616"/>
    </ligand>
</feature>
<feature type="binding site" evidence="1">
    <location>
        <position position="120"/>
    </location>
    <ligand>
        <name>ATP</name>
        <dbReference type="ChEBI" id="CHEBI:30616"/>
    </ligand>
</feature>
<feature type="binding site" evidence="1">
    <location>
        <position position="143"/>
    </location>
    <ligand>
        <name>ATP</name>
        <dbReference type="ChEBI" id="CHEBI:30616"/>
    </ligand>
</feature>
<feature type="binding site" evidence="1">
    <location>
        <position position="177"/>
    </location>
    <ligand>
        <name>ATP</name>
        <dbReference type="ChEBI" id="CHEBI:30616"/>
    </ligand>
</feature>
<feature type="binding site" evidence="1">
    <location>
        <position position="219"/>
    </location>
    <ligand>
        <name>Zn(2+)</name>
        <dbReference type="ChEBI" id="CHEBI:29105"/>
    </ligand>
</feature>
<feature type="binding site" evidence="1">
    <location>
        <position position="222"/>
    </location>
    <ligand>
        <name>Zn(2+)</name>
        <dbReference type="ChEBI" id="CHEBI:29105"/>
    </ligand>
</feature>
<feature type="binding site" evidence="1">
    <location>
        <position position="296"/>
    </location>
    <ligand>
        <name>Zn(2+)</name>
        <dbReference type="ChEBI" id="CHEBI:29105"/>
    </ligand>
</feature>
<feature type="binding site" evidence="1">
    <location>
        <position position="301"/>
    </location>
    <ligand>
        <name>Zn(2+)</name>
        <dbReference type="ChEBI" id="CHEBI:29105"/>
    </ligand>
</feature>
<sequence>MTNAIDELQAIIAELKTEVEEQRAVIRQSRDRIEHMSAEVVDSNPYSRLMALQRMNIVKNYERIRDKTVAIVGVGGVGSVTADMLTRCGIGKLILFDYDKVELANMNRLFFTPDQAGLSKVEAAARTLTFINPDVRIETHNYNITTIDNFDNFLSTITGDGTVAGEPVDLVLSCVDNFEARMAINAACNEKCLNWFESGVSENAVSGHIQFLRPGDTACFACAPPLVVAENIDEKTLKREGVCAASLPTTMGITAGFLVQNALKYLLNFGEVSDYLGYNALNDFFPKMTLKPNPQCDDRNCLLRQKEFQARPKPVVVQEEAPTDEPLHASNDWGIELVAEDAPSDAPTDLSQSTDVGQGLRLAYEAPEKSSAEATQAATAPVDDTSLEDLMAQMKSM</sequence>
<proteinExistence type="inferred from homology"/>
<reference key="1">
    <citation type="journal article" date="2005" name="Genome Res.">
        <title>Comparative genome sequencing of Drosophila pseudoobscura: chromosomal, gene, and cis-element evolution.</title>
        <authorList>
            <person name="Richards S."/>
            <person name="Liu Y."/>
            <person name="Bettencourt B.R."/>
            <person name="Hradecky P."/>
            <person name="Letovsky S."/>
            <person name="Nielsen R."/>
            <person name="Thornton K."/>
            <person name="Hubisz M.J."/>
            <person name="Chen R."/>
            <person name="Meisel R.P."/>
            <person name="Couronne O."/>
            <person name="Hua S."/>
            <person name="Smith M.A."/>
            <person name="Zhang P."/>
            <person name="Liu J."/>
            <person name="Bussemaker H.J."/>
            <person name="van Batenburg M.F."/>
            <person name="Howells S.L."/>
            <person name="Scherer S.E."/>
            <person name="Sodergren E."/>
            <person name="Matthews B.B."/>
            <person name="Crosby M.A."/>
            <person name="Schroeder A.J."/>
            <person name="Ortiz-Barrientos D."/>
            <person name="Rives C.M."/>
            <person name="Metzker M.L."/>
            <person name="Muzny D.M."/>
            <person name="Scott G."/>
            <person name="Steffen D."/>
            <person name="Wheeler D.A."/>
            <person name="Worley K.C."/>
            <person name="Havlak P."/>
            <person name="Durbin K.J."/>
            <person name="Egan A."/>
            <person name="Gill R."/>
            <person name="Hume J."/>
            <person name="Morgan M.B."/>
            <person name="Miner G."/>
            <person name="Hamilton C."/>
            <person name="Huang Y."/>
            <person name="Waldron L."/>
            <person name="Verduzco D."/>
            <person name="Clerc-Blankenburg K.P."/>
            <person name="Dubchak I."/>
            <person name="Noor M.A.F."/>
            <person name="Anderson W."/>
            <person name="White K.P."/>
            <person name="Clark A.G."/>
            <person name="Schaeffer S.W."/>
            <person name="Gelbart W.M."/>
            <person name="Weinstock G.M."/>
            <person name="Gibbs R.A."/>
        </authorList>
    </citation>
    <scope>NUCLEOTIDE SEQUENCE [LARGE SCALE GENOMIC DNA]</scope>
    <source>
        <strain>MV2-25 / Tucson 14011-0121.94</strain>
    </source>
</reference>
<dbReference type="EMBL" id="CH379064">
    <property type="protein sequence ID" value="EAL31677.1"/>
    <property type="molecule type" value="Genomic_DNA"/>
</dbReference>
<dbReference type="RefSeq" id="XP_001354623.1">
    <property type="nucleotide sequence ID" value="XM_001354587.3"/>
</dbReference>
<dbReference type="RefSeq" id="XP_015041519.1">
    <property type="nucleotide sequence ID" value="XM_015186033.1"/>
</dbReference>
<dbReference type="SMR" id="Q29HT0"/>
<dbReference type="FunCoup" id="Q29HT0">
    <property type="interactions" value="2463"/>
</dbReference>
<dbReference type="STRING" id="46245.Q29HT0"/>
<dbReference type="EnsemblMetazoa" id="FBtr0287868">
    <property type="protein sequence ID" value="FBpp0286306"/>
    <property type="gene ID" value="FBgn0074554"/>
</dbReference>
<dbReference type="EnsemblMetazoa" id="FBtr0365778">
    <property type="protein sequence ID" value="FBpp0329057"/>
    <property type="gene ID" value="FBgn0074554"/>
</dbReference>
<dbReference type="KEGG" id="dpo:4814656"/>
<dbReference type="CTD" id="79876"/>
<dbReference type="eggNOG" id="KOG2336">
    <property type="taxonomic scope" value="Eukaryota"/>
</dbReference>
<dbReference type="HOGENOM" id="CLU_013325_0_1_1"/>
<dbReference type="InParanoid" id="Q29HT0"/>
<dbReference type="OMA" id="MNIVKDY"/>
<dbReference type="PhylomeDB" id="Q29HT0"/>
<dbReference type="Proteomes" id="UP000001819">
    <property type="component" value="Chromosome X"/>
</dbReference>
<dbReference type="Bgee" id="FBgn0074554">
    <property type="expression patterns" value="Expressed in male reproductive system and 3 other cell types or tissues"/>
</dbReference>
<dbReference type="ExpressionAtlas" id="Q29HT0">
    <property type="expression patterns" value="baseline"/>
</dbReference>
<dbReference type="GO" id="GO:0005829">
    <property type="term" value="C:cytosol"/>
    <property type="evidence" value="ECO:0007669"/>
    <property type="project" value="TreeGrafter"/>
</dbReference>
<dbReference type="GO" id="GO:0005524">
    <property type="term" value="F:ATP binding"/>
    <property type="evidence" value="ECO:0007669"/>
    <property type="project" value="UniProtKB-KW"/>
</dbReference>
<dbReference type="GO" id="GO:0046872">
    <property type="term" value="F:metal ion binding"/>
    <property type="evidence" value="ECO:0007669"/>
    <property type="project" value="UniProtKB-KW"/>
</dbReference>
<dbReference type="GO" id="GO:0071566">
    <property type="term" value="F:UFM1 activating enzyme activity"/>
    <property type="evidence" value="ECO:0007669"/>
    <property type="project" value="TreeGrafter"/>
</dbReference>
<dbReference type="GO" id="GO:0071569">
    <property type="term" value="P:protein ufmylation"/>
    <property type="evidence" value="ECO:0007669"/>
    <property type="project" value="TreeGrafter"/>
</dbReference>
<dbReference type="CDD" id="cd00757">
    <property type="entry name" value="ThiF_MoeB_HesA_family"/>
    <property type="match status" value="1"/>
</dbReference>
<dbReference type="FunFam" id="3.40.50.720:FF:000066">
    <property type="entry name" value="Putative ubiquitin-like modifier-activating enzyme 5"/>
    <property type="match status" value="1"/>
</dbReference>
<dbReference type="Gene3D" id="3.40.50.720">
    <property type="entry name" value="NAD(P)-binding Rossmann-like Domain"/>
    <property type="match status" value="1"/>
</dbReference>
<dbReference type="InterPro" id="IPR029752">
    <property type="entry name" value="D-isomer_DH_CS1"/>
</dbReference>
<dbReference type="InterPro" id="IPR045886">
    <property type="entry name" value="ThiF/MoeB/HesA"/>
</dbReference>
<dbReference type="InterPro" id="IPR000594">
    <property type="entry name" value="ThiF_NAD_FAD-bd"/>
</dbReference>
<dbReference type="InterPro" id="IPR035985">
    <property type="entry name" value="Ubiquitin-activating_enz"/>
</dbReference>
<dbReference type="PANTHER" id="PTHR10953">
    <property type="entry name" value="UBIQUITIN-ACTIVATING ENZYME E1"/>
    <property type="match status" value="1"/>
</dbReference>
<dbReference type="PANTHER" id="PTHR10953:SF9">
    <property type="entry name" value="UBIQUITIN-LIKE MODIFIER-ACTIVATING ENZYME 5"/>
    <property type="match status" value="1"/>
</dbReference>
<dbReference type="Pfam" id="PF00899">
    <property type="entry name" value="ThiF"/>
    <property type="match status" value="1"/>
</dbReference>
<dbReference type="SUPFAM" id="SSF69572">
    <property type="entry name" value="Activating enzymes of the ubiquitin-like proteins"/>
    <property type="match status" value="1"/>
</dbReference>